<feature type="signal peptide" evidence="1">
    <location>
        <begin position="1"/>
        <end position="19"/>
    </location>
</feature>
<feature type="chain" id="PRO_5002644331" description="Salivary protein FS50" evidence="1">
    <location>
        <begin position="20"/>
        <end position="96"/>
    </location>
</feature>
<feature type="disulfide bond" evidence="2 8">
    <location>
        <begin position="26"/>
        <end position="71"/>
    </location>
</feature>
<feature type="disulfide bond" evidence="2 8">
    <location>
        <begin position="50"/>
        <end position="78"/>
    </location>
</feature>
<feature type="disulfide bond" evidence="2 8">
    <location>
        <begin position="63"/>
        <end position="91"/>
    </location>
</feature>
<feature type="disulfide bond" evidence="2 8">
    <location>
        <begin position="67"/>
        <end position="93"/>
    </location>
</feature>
<feature type="mutagenesis site" description="Reduces inhibitory effect on host Nav1.5/SCN5A activity." evidence="2">
    <original>R</original>
    <variation>A</variation>
    <location>
        <position position="25"/>
    </location>
</feature>
<feature type="mutagenesis site" description="Reduces inhibitory effect on host Nav1.5/SCN5A activity." evidence="2">
    <original>H</original>
    <variation>A</variation>
    <location>
        <position position="30"/>
    </location>
</feature>
<feature type="mutagenesis site" description="No significant effect on inhibition of host Nav1.5/SCN5A activity." evidence="2">
    <original>K</original>
    <variation>A</variation>
    <location>
        <position position="47"/>
    </location>
</feature>
<feature type="mutagenesis site" description="Reduces inhibitory effect on host Nav1.5/SCN5A activity." evidence="2">
    <original>K</original>
    <variation>A</variation>
    <location>
        <position position="51"/>
    </location>
</feature>
<feature type="mutagenesis site" description="No significant effect on inhibition of host Nav1.5/SCN5A activity." evidence="2">
    <original>T</original>
    <variation>A</variation>
    <location>
        <position position="53"/>
    </location>
</feature>
<feature type="mutagenesis site" description="No significant effect on inhibition of host Nav1.5/SCN5A activity." evidence="2">
    <original>Q</original>
    <variation>A</variation>
    <location>
        <position position="57"/>
    </location>
</feature>
<feature type="mutagenesis site" description="No significant effect on inhibition of host Nav1.5/SCN5A activity." evidence="2">
    <original>K</original>
    <variation>A</variation>
    <location>
        <position position="58"/>
    </location>
</feature>
<feature type="mutagenesis site" description="No significant effect on inhibition of host Nav1.5/SCN5A activity." evidence="2">
    <original>D</original>
    <variation>A</variation>
    <location>
        <position position="64"/>
    </location>
</feature>
<sequence length="96" mass="10254">MKWILVLALVCLAVEYSYSWKVSERCLKGHGKFQADQEIGNGLATAKGQCKGTDSDQKKAGKCDKHCTGVCLGSGGSCGDGSSQKPNKEDCYCKSK</sequence>
<keyword id="KW-0002">3D-structure</keyword>
<keyword id="KW-1015">Disulfide bond</keyword>
<keyword id="KW-0872">Ion channel impairing toxin</keyword>
<keyword id="KW-0964">Secreted</keyword>
<keyword id="KW-0732">Signal</keyword>
<keyword id="KW-0800">Toxin</keyword>
<keyword id="KW-0738">Voltage-gated sodium channel impairing toxin</keyword>
<evidence type="ECO:0000255" key="1"/>
<evidence type="ECO:0000269" key="2">
    <source>
    </source>
</evidence>
<evidence type="ECO:0000269" key="3">
    <source>
    </source>
</evidence>
<evidence type="ECO:0000303" key="4">
    <source>
    </source>
</evidence>
<evidence type="ECO:0000303" key="5">
    <source>
    </source>
</evidence>
<evidence type="ECO:0000305" key="6"/>
<evidence type="ECO:0000312" key="7">
    <source>
        <dbReference type="EMBL" id="ABM55452.1"/>
    </source>
</evidence>
<evidence type="ECO:0007744" key="8">
    <source>
        <dbReference type="PDB" id="5K6D"/>
    </source>
</evidence>
<comment type="function">
    <text evidence="2 3">Salivary protein that inhibits host voltage-gated sodium channel Nav1.5/SCN5A.</text>
</comment>
<comment type="subcellular location">
    <subcellularLocation>
        <location evidence="6">Secreted</location>
    </subcellularLocation>
</comment>
<comment type="miscellaneous">
    <text evidence="2">Intravenous injection of the protein shows anti-arrhythmia effects in BaCl(2)-induced arrhythmia models in rats and monkeys.</text>
</comment>
<proteinExistence type="evidence at protein level"/>
<accession>A2IAD2</accession>
<protein>
    <recommendedName>
        <fullName evidence="4 5">Salivary protein FS50</fullName>
        <shortName evidence="4 5">FS50</shortName>
    </recommendedName>
</protein>
<organism>
    <name type="scientific">Xenopsylla cheopis</name>
    <name type="common">Oriental rat flea</name>
    <name type="synonym">Pulex cheopis</name>
    <dbReference type="NCBI Taxonomy" id="163159"/>
    <lineage>
        <taxon>Eukaryota</taxon>
        <taxon>Metazoa</taxon>
        <taxon>Ecdysozoa</taxon>
        <taxon>Arthropoda</taxon>
        <taxon>Hexapoda</taxon>
        <taxon>Insecta</taxon>
        <taxon>Pterygota</taxon>
        <taxon>Neoptera</taxon>
        <taxon>Endopterygota</taxon>
        <taxon>Siphonaptera</taxon>
        <taxon>Pulicidae</taxon>
        <taxon>Xenopsyllinae</taxon>
        <taxon>Xenopsylla</taxon>
    </lineage>
</organism>
<reference evidence="7" key="1">
    <citation type="journal article" date="2007" name="BMC Genomics">
        <title>An insight into the sialome of the oriental rat flea, Xenopsylla cheopis (Rots).</title>
        <authorList>
            <person name="Andersen J.F."/>
            <person name="Hinnebusch B.J."/>
            <person name="Lucas D.A."/>
            <person name="Conrads T.P."/>
            <person name="Veenstra T.D."/>
            <person name="Pham V.M."/>
            <person name="Ribeiro J.M."/>
        </authorList>
    </citation>
    <scope>NUCLEOTIDE SEQUENCE [LARGE SCALE MRNA]</scope>
    <source>
        <tissue evidence="7">Salivary gland</tissue>
    </source>
</reference>
<reference evidence="6" key="2">
    <citation type="journal article" date="2018" name="Anticancer Drugs">
        <title>In-vitro effects of the FS50 protein from salivary glands of Xenopsylla cheopis on voltage-gated sodium channel activity and motility of MDA-MB-231 human breast cancer cells.</title>
        <authorList>
            <person name="Zhang B."/>
            <person name="Deng Z."/>
            <person name="Zeng B."/>
            <person name="Yang S."/>
            <person name="Chen X."/>
            <person name="Xu X."/>
            <person name="Wu J."/>
        </authorList>
    </citation>
    <scope>FUNCTION</scope>
</reference>
<reference evidence="8" key="3">
    <citation type="journal article" date="2016" name="Sci. Rep.">
        <title>Structure and Function of FS50, a salivary protein from the flea Xenopsylla cheopis that blocks the sodium channel Na&lt;sub&gt;V&lt;/sub&gt;1.5.</title>
        <authorList>
            <person name="Xu X."/>
            <person name="Zhang B."/>
            <person name="Yang S."/>
            <person name="An S."/>
            <person name="Ribeiro J.M."/>
            <person name="Andersen J.F."/>
        </authorList>
    </citation>
    <scope>X-RAY CRYSTALLOGRAPHY (1.14 ANGSTROMS) OF 20-96</scope>
    <scope>FUNCTION</scope>
    <scope>DISULFIDE BONDS</scope>
    <scope>MUTAGENESIS OF ARG-25; HIS-30; LYS-47; LYS-51; THR-53; GLN-57; LYS-58 AND ASP-64</scope>
</reference>
<name>FS50_XENCH</name>
<dbReference type="EMBL" id="EF179446">
    <property type="protein sequence ID" value="ABM55452.1"/>
    <property type="molecule type" value="mRNA"/>
</dbReference>
<dbReference type="PDB" id="5K6D">
    <property type="method" value="X-ray"/>
    <property type="resolution" value="1.14 A"/>
    <property type="chains" value="A/B=20-96"/>
</dbReference>
<dbReference type="PDBsum" id="5K6D"/>
<dbReference type="SMR" id="A2IAD2"/>
<dbReference type="GO" id="GO:0005576">
    <property type="term" value="C:extracellular region"/>
    <property type="evidence" value="ECO:0007669"/>
    <property type="project" value="UniProtKB-SubCell"/>
</dbReference>